<keyword id="KW-1185">Reference proteome</keyword>
<keyword id="KW-0687">Ribonucleoprotein</keyword>
<keyword id="KW-0689">Ribosomal protein</keyword>
<keyword id="KW-0694">RNA-binding</keyword>
<keyword id="KW-0699">rRNA-binding</keyword>
<feature type="chain" id="PRO_0000104739" description="Large ribosomal subunit protein uL15">
    <location>
        <begin position="1"/>
        <end position="147"/>
    </location>
</feature>
<feature type="region of interest" description="Disordered" evidence="2">
    <location>
        <begin position="1"/>
        <end position="57"/>
    </location>
</feature>
<feature type="compositionally biased region" description="Basic and acidic residues" evidence="2">
    <location>
        <begin position="1"/>
        <end position="13"/>
    </location>
</feature>
<feature type="compositionally biased region" description="Gly residues" evidence="2">
    <location>
        <begin position="23"/>
        <end position="35"/>
    </location>
</feature>
<feature type="compositionally biased region" description="Gly residues" evidence="2">
    <location>
        <begin position="42"/>
        <end position="52"/>
    </location>
</feature>
<reference key="1">
    <citation type="journal article" date="2001" name="Genome Res.">
        <title>The complete genome sequence of the lactic acid bacterium Lactococcus lactis ssp. lactis IL1403.</title>
        <authorList>
            <person name="Bolotin A."/>
            <person name="Wincker P."/>
            <person name="Mauger S."/>
            <person name="Jaillon O."/>
            <person name="Malarme K."/>
            <person name="Weissenbach J."/>
            <person name="Ehrlich S.D."/>
            <person name="Sorokin A."/>
        </authorList>
    </citation>
    <scope>NUCLEOTIDE SEQUENCE [LARGE SCALE GENOMIC DNA]</scope>
    <source>
        <strain>IL1403</strain>
    </source>
</reference>
<proteinExistence type="inferred from homology"/>
<name>RL15_LACLA</name>
<sequence length="147" mass="15377">MELHSLKAAEGSRKVRNRVGRGTSSGNGKTSGRGQKGQKSRSGGGVRPGFEGGQTELFRRMPKRGFLNVNRKEYAIVNLETLNRLEDGATVSAETLVAAKIIKDVKSGVKVLANGELTAKKLTVKVAKVSAAAKAAIEAAGGSVEEA</sequence>
<comment type="function">
    <text evidence="1">Binds to the 23S rRNA.</text>
</comment>
<comment type="subunit">
    <text evidence="1">Part of the 50S ribosomal subunit.</text>
</comment>
<comment type="similarity">
    <text evidence="1">Belongs to the universal ribosomal protein uL15 family.</text>
</comment>
<protein>
    <recommendedName>
        <fullName evidence="1">Large ribosomal subunit protein uL15</fullName>
    </recommendedName>
    <alternativeName>
        <fullName evidence="3">50S ribosomal protein L15</fullName>
    </alternativeName>
</protein>
<organism>
    <name type="scientific">Lactococcus lactis subsp. lactis (strain IL1403)</name>
    <name type="common">Streptococcus lactis</name>
    <dbReference type="NCBI Taxonomy" id="272623"/>
    <lineage>
        <taxon>Bacteria</taxon>
        <taxon>Bacillati</taxon>
        <taxon>Bacillota</taxon>
        <taxon>Bacilli</taxon>
        <taxon>Lactobacillales</taxon>
        <taxon>Streptococcaceae</taxon>
        <taxon>Lactococcus</taxon>
    </lineage>
</organism>
<dbReference type="EMBL" id="AE005176">
    <property type="protein sequence ID" value="AAK06177.1"/>
    <property type="molecule type" value="Genomic_DNA"/>
</dbReference>
<dbReference type="PIR" id="G86884">
    <property type="entry name" value="G86884"/>
</dbReference>
<dbReference type="RefSeq" id="NP_268236.1">
    <property type="nucleotide sequence ID" value="NC_002662.1"/>
</dbReference>
<dbReference type="RefSeq" id="WP_003129920.1">
    <property type="nucleotide sequence ID" value="NC_002662.1"/>
</dbReference>
<dbReference type="SMR" id="P58121"/>
<dbReference type="PaxDb" id="272623-L0411"/>
<dbReference type="EnsemblBacteria" id="AAK06177">
    <property type="protein sequence ID" value="AAK06177"/>
    <property type="gene ID" value="L0411"/>
</dbReference>
<dbReference type="GeneID" id="89634427"/>
<dbReference type="KEGG" id="lla:L0411"/>
<dbReference type="PATRIC" id="fig|272623.7.peg.2238"/>
<dbReference type="eggNOG" id="COG0200">
    <property type="taxonomic scope" value="Bacteria"/>
</dbReference>
<dbReference type="HOGENOM" id="CLU_055188_4_2_9"/>
<dbReference type="OrthoDB" id="9810293at2"/>
<dbReference type="Proteomes" id="UP000002196">
    <property type="component" value="Chromosome"/>
</dbReference>
<dbReference type="GO" id="GO:0022625">
    <property type="term" value="C:cytosolic large ribosomal subunit"/>
    <property type="evidence" value="ECO:0007669"/>
    <property type="project" value="TreeGrafter"/>
</dbReference>
<dbReference type="GO" id="GO:0019843">
    <property type="term" value="F:rRNA binding"/>
    <property type="evidence" value="ECO:0007669"/>
    <property type="project" value="UniProtKB-UniRule"/>
</dbReference>
<dbReference type="GO" id="GO:0003735">
    <property type="term" value="F:structural constituent of ribosome"/>
    <property type="evidence" value="ECO:0007669"/>
    <property type="project" value="InterPro"/>
</dbReference>
<dbReference type="GO" id="GO:0006412">
    <property type="term" value="P:translation"/>
    <property type="evidence" value="ECO:0007669"/>
    <property type="project" value="UniProtKB-UniRule"/>
</dbReference>
<dbReference type="Gene3D" id="3.100.10.10">
    <property type="match status" value="1"/>
</dbReference>
<dbReference type="HAMAP" id="MF_01341">
    <property type="entry name" value="Ribosomal_uL15"/>
    <property type="match status" value="1"/>
</dbReference>
<dbReference type="InterPro" id="IPR030878">
    <property type="entry name" value="Ribosomal_uL15"/>
</dbReference>
<dbReference type="InterPro" id="IPR021131">
    <property type="entry name" value="Ribosomal_uL15/eL18"/>
</dbReference>
<dbReference type="InterPro" id="IPR036227">
    <property type="entry name" value="Ribosomal_uL15/eL18_sf"/>
</dbReference>
<dbReference type="InterPro" id="IPR005749">
    <property type="entry name" value="Ribosomal_uL15_bac-type"/>
</dbReference>
<dbReference type="InterPro" id="IPR001196">
    <property type="entry name" value="Ribosomal_uL15_CS"/>
</dbReference>
<dbReference type="NCBIfam" id="TIGR01071">
    <property type="entry name" value="rplO_bact"/>
    <property type="match status" value="1"/>
</dbReference>
<dbReference type="PANTHER" id="PTHR12934">
    <property type="entry name" value="50S RIBOSOMAL PROTEIN L15"/>
    <property type="match status" value="1"/>
</dbReference>
<dbReference type="PANTHER" id="PTHR12934:SF11">
    <property type="entry name" value="LARGE RIBOSOMAL SUBUNIT PROTEIN UL15M"/>
    <property type="match status" value="1"/>
</dbReference>
<dbReference type="Pfam" id="PF00828">
    <property type="entry name" value="Ribosomal_L27A"/>
    <property type="match status" value="1"/>
</dbReference>
<dbReference type="SUPFAM" id="SSF52080">
    <property type="entry name" value="Ribosomal proteins L15p and L18e"/>
    <property type="match status" value="1"/>
</dbReference>
<dbReference type="PROSITE" id="PS00475">
    <property type="entry name" value="RIBOSOMAL_L15"/>
    <property type="match status" value="1"/>
</dbReference>
<accession>P58121</accession>
<gene>
    <name evidence="1" type="primary">rplO</name>
    <name type="ordered locus">LL2079</name>
    <name type="ORF">L0411</name>
</gene>
<evidence type="ECO:0000255" key="1">
    <source>
        <dbReference type="HAMAP-Rule" id="MF_01341"/>
    </source>
</evidence>
<evidence type="ECO:0000256" key="2">
    <source>
        <dbReference type="SAM" id="MobiDB-lite"/>
    </source>
</evidence>
<evidence type="ECO:0000305" key="3"/>